<organism>
    <name type="scientific">Synechococcus sp. (strain CC9311)</name>
    <dbReference type="NCBI Taxonomy" id="64471"/>
    <lineage>
        <taxon>Bacteria</taxon>
        <taxon>Bacillati</taxon>
        <taxon>Cyanobacteriota</taxon>
        <taxon>Cyanophyceae</taxon>
        <taxon>Synechococcales</taxon>
        <taxon>Synechococcaceae</taxon>
        <taxon>Synechococcus</taxon>
    </lineage>
</organism>
<keyword id="KW-1185">Reference proteome</keyword>
<keyword id="KW-0687">Ribonucleoprotein</keyword>
<keyword id="KW-0689">Ribosomal protein</keyword>
<keyword id="KW-0694">RNA-binding</keyword>
<keyword id="KW-0699">rRNA-binding</keyword>
<proteinExistence type="inferred from homology"/>
<name>RL6_SYNS3</name>
<reference key="1">
    <citation type="journal article" date="2006" name="Proc. Natl. Acad. Sci. U.S.A.">
        <title>Genome sequence of Synechococcus CC9311: insights into adaptation to a coastal environment.</title>
        <authorList>
            <person name="Palenik B."/>
            <person name="Ren Q."/>
            <person name="Dupont C.L."/>
            <person name="Myers G.S."/>
            <person name="Heidelberg J.F."/>
            <person name="Badger J.H."/>
            <person name="Madupu R."/>
            <person name="Nelson W.C."/>
            <person name="Brinkac L.M."/>
            <person name="Dodson R.J."/>
            <person name="Durkin A.S."/>
            <person name="Daugherty S.C."/>
            <person name="Sullivan S.A."/>
            <person name="Khouri H."/>
            <person name="Mohamoud Y."/>
            <person name="Halpin R."/>
            <person name="Paulsen I.T."/>
        </authorList>
    </citation>
    <scope>NUCLEOTIDE SEQUENCE [LARGE SCALE GENOMIC DNA]</scope>
    <source>
        <strain>CC9311</strain>
    </source>
</reference>
<feature type="chain" id="PRO_0000265304" description="Large ribosomal subunit protein uL6">
    <location>
        <begin position="1"/>
        <end position="179"/>
    </location>
</feature>
<protein>
    <recommendedName>
        <fullName evidence="1">Large ribosomal subunit protein uL6</fullName>
    </recommendedName>
    <alternativeName>
        <fullName evidence="2">50S ribosomal protein L6</fullName>
    </alternativeName>
</protein>
<accession>Q0ID19</accession>
<dbReference type="EMBL" id="CP000435">
    <property type="protein sequence ID" value="ABI46694.1"/>
    <property type="molecule type" value="Genomic_DNA"/>
</dbReference>
<dbReference type="RefSeq" id="WP_011618388.1">
    <property type="nucleotide sequence ID" value="NC_008319.1"/>
</dbReference>
<dbReference type="SMR" id="Q0ID19"/>
<dbReference type="STRING" id="64471.sync_0423"/>
<dbReference type="KEGG" id="syg:sync_0423"/>
<dbReference type="eggNOG" id="COG0097">
    <property type="taxonomic scope" value="Bacteria"/>
</dbReference>
<dbReference type="HOGENOM" id="CLU_065464_1_2_3"/>
<dbReference type="OrthoDB" id="9805007at2"/>
<dbReference type="Proteomes" id="UP000001961">
    <property type="component" value="Chromosome"/>
</dbReference>
<dbReference type="GO" id="GO:0022625">
    <property type="term" value="C:cytosolic large ribosomal subunit"/>
    <property type="evidence" value="ECO:0007669"/>
    <property type="project" value="TreeGrafter"/>
</dbReference>
<dbReference type="GO" id="GO:0019843">
    <property type="term" value="F:rRNA binding"/>
    <property type="evidence" value="ECO:0007669"/>
    <property type="project" value="UniProtKB-UniRule"/>
</dbReference>
<dbReference type="GO" id="GO:0003735">
    <property type="term" value="F:structural constituent of ribosome"/>
    <property type="evidence" value="ECO:0007669"/>
    <property type="project" value="InterPro"/>
</dbReference>
<dbReference type="GO" id="GO:0002181">
    <property type="term" value="P:cytoplasmic translation"/>
    <property type="evidence" value="ECO:0007669"/>
    <property type="project" value="TreeGrafter"/>
</dbReference>
<dbReference type="FunFam" id="3.90.930.12:FF:000001">
    <property type="entry name" value="50S ribosomal protein L6"/>
    <property type="match status" value="1"/>
</dbReference>
<dbReference type="FunFam" id="3.90.930.12:FF:000002">
    <property type="entry name" value="50S ribosomal protein L6"/>
    <property type="match status" value="1"/>
</dbReference>
<dbReference type="Gene3D" id="3.90.930.12">
    <property type="entry name" value="Ribosomal protein L6, alpha-beta domain"/>
    <property type="match status" value="2"/>
</dbReference>
<dbReference type="HAMAP" id="MF_01365_B">
    <property type="entry name" value="Ribosomal_uL6_B"/>
    <property type="match status" value="1"/>
</dbReference>
<dbReference type="InterPro" id="IPR000702">
    <property type="entry name" value="Ribosomal_uL6-like"/>
</dbReference>
<dbReference type="InterPro" id="IPR036789">
    <property type="entry name" value="Ribosomal_uL6-like_a/b-dom_sf"/>
</dbReference>
<dbReference type="InterPro" id="IPR020040">
    <property type="entry name" value="Ribosomal_uL6_a/b-dom"/>
</dbReference>
<dbReference type="InterPro" id="IPR019906">
    <property type="entry name" value="Ribosomal_uL6_bac-type"/>
</dbReference>
<dbReference type="InterPro" id="IPR002358">
    <property type="entry name" value="Ribosomal_uL6_CS"/>
</dbReference>
<dbReference type="NCBIfam" id="TIGR03654">
    <property type="entry name" value="L6_bact"/>
    <property type="match status" value="1"/>
</dbReference>
<dbReference type="PANTHER" id="PTHR11655">
    <property type="entry name" value="60S/50S RIBOSOMAL PROTEIN L6/L9"/>
    <property type="match status" value="1"/>
</dbReference>
<dbReference type="PANTHER" id="PTHR11655:SF14">
    <property type="entry name" value="LARGE RIBOSOMAL SUBUNIT PROTEIN UL6M"/>
    <property type="match status" value="1"/>
</dbReference>
<dbReference type="Pfam" id="PF00347">
    <property type="entry name" value="Ribosomal_L6"/>
    <property type="match status" value="2"/>
</dbReference>
<dbReference type="PIRSF" id="PIRSF002162">
    <property type="entry name" value="Ribosomal_L6"/>
    <property type="match status" value="1"/>
</dbReference>
<dbReference type="PRINTS" id="PR00059">
    <property type="entry name" value="RIBOSOMALL6"/>
</dbReference>
<dbReference type="SUPFAM" id="SSF56053">
    <property type="entry name" value="Ribosomal protein L6"/>
    <property type="match status" value="2"/>
</dbReference>
<dbReference type="PROSITE" id="PS00525">
    <property type="entry name" value="RIBOSOMAL_L6_1"/>
    <property type="match status" value="1"/>
</dbReference>
<gene>
    <name evidence="1" type="primary">rplF</name>
    <name evidence="1" type="synonym">rpl6</name>
    <name type="ordered locus">sync_0423</name>
</gene>
<sequence length="179" mass="18951">MSRIGKNPIPIPDKVNVTLSGLAVTVKGPKGELKRTLPSGVSVNQVDNSIVVAPTSTKRSSRERHGLCRTLVANMVIGVSQGYSKKLEIVGVGSRAQVKGKTLVVSAGYSHPVEVVPPEGITFTVENNTNVTVSGTDKELVGNEAAKIRAIRPPEPYKGKGIKYAGERILRKAGKSGKK</sequence>
<evidence type="ECO:0000255" key="1">
    <source>
        <dbReference type="HAMAP-Rule" id="MF_01365"/>
    </source>
</evidence>
<evidence type="ECO:0000305" key="2"/>
<comment type="function">
    <text evidence="1">This protein binds to the 23S rRNA, and is important in its secondary structure. It is located near the subunit interface in the base of the L7/L12 stalk, and near the tRNA binding site of the peptidyltransferase center.</text>
</comment>
<comment type="subunit">
    <text evidence="1">Part of the 50S ribosomal subunit.</text>
</comment>
<comment type="similarity">
    <text evidence="1">Belongs to the universal ribosomal protein uL6 family.</text>
</comment>